<gene>
    <name evidence="1" type="primary">glyQS</name>
    <name type="ordered locus">SH1351</name>
</gene>
<dbReference type="EC" id="6.1.1.14" evidence="1"/>
<dbReference type="EMBL" id="AP006716">
    <property type="protein sequence ID" value="BAE04660.1"/>
    <property type="molecule type" value="Genomic_DNA"/>
</dbReference>
<dbReference type="RefSeq" id="WP_011275647.1">
    <property type="nucleotide sequence ID" value="NC_007168.1"/>
</dbReference>
<dbReference type="SMR" id="Q4L6R5"/>
<dbReference type="KEGG" id="sha:SH1351"/>
<dbReference type="eggNOG" id="COG0423">
    <property type="taxonomic scope" value="Bacteria"/>
</dbReference>
<dbReference type="HOGENOM" id="CLU_015515_2_1_9"/>
<dbReference type="OrthoDB" id="9760853at2"/>
<dbReference type="Proteomes" id="UP000000543">
    <property type="component" value="Chromosome"/>
</dbReference>
<dbReference type="GO" id="GO:0005737">
    <property type="term" value="C:cytoplasm"/>
    <property type="evidence" value="ECO:0007669"/>
    <property type="project" value="UniProtKB-SubCell"/>
</dbReference>
<dbReference type="GO" id="GO:0005524">
    <property type="term" value="F:ATP binding"/>
    <property type="evidence" value="ECO:0007669"/>
    <property type="project" value="UniProtKB-UniRule"/>
</dbReference>
<dbReference type="GO" id="GO:0140096">
    <property type="term" value="F:catalytic activity, acting on a protein"/>
    <property type="evidence" value="ECO:0007669"/>
    <property type="project" value="UniProtKB-ARBA"/>
</dbReference>
<dbReference type="GO" id="GO:0004820">
    <property type="term" value="F:glycine-tRNA ligase activity"/>
    <property type="evidence" value="ECO:0000250"/>
    <property type="project" value="UniProtKB"/>
</dbReference>
<dbReference type="GO" id="GO:0046983">
    <property type="term" value="F:protein dimerization activity"/>
    <property type="evidence" value="ECO:0000250"/>
    <property type="project" value="UniProtKB"/>
</dbReference>
<dbReference type="GO" id="GO:0016740">
    <property type="term" value="F:transferase activity"/>
    <property type="evidence" value="ECO:0007669"/>
    <property type="project" value="UniProtKB-ARBA"/>
</dbReference>
<dbReference type="GO" id="GO:0006426">
    <property type="term" value="P:glycyl-tRNA aminoacylation"/>
    <property type="evidence" value="ECO:0007669"/>
    <property type="project" value="UniProtKB-UniRule"/>
</dbReference>
<dbReference type="CDD" id="cd00774">
    <property type="entry name" value="GlyRS-like_core"/>
    <property type="match status" value="1"/>
</dbReference>
<dbReference type="CDD" id="cd00858">
    <property type="entry name" value="GlyRS_anticodon"/>
    <property type="match status" value="1"/>
</dbReference>
<dbReference type="FunFam" id="3.40.50.800:FF:000002">
    <property type="entry name" value="Glycine--tRNA ligase"/>
    <property type="match status" value="1"/>
</dbReference>
<dbReference type="Gene3D" id="3.30.40.230">
    <property type="match status" value="1"/>
</dbReference>
<dbReference type="Gene3D" id="3.40.50.800">
    <property type="entry name" value="Anticodon-binding domain"/>
    <property type="match status" value="1"/>
</dbReference>
<dbReference type="Gene3D" id="3.30.930.10">
    <property type="entry name" value="Bira Bifunctional Protein, Domain 2"/>
    <property type="match status" value="1"/>
</dbReference>
<dbReference type="HAMAP" id="MF_00253_B">
    <property type="entry name" value="Gly_tRNA_synth_B"/>
    <property type="match status" value="1"/>
</dbReference>
<dbReference type="InterPro" id="IPR002314">
    <property type="entry name" value="aa-tRNA-synt_IIb"/>
</dbReference>
<dbReference type="InterPro" id="IPR006195">
    <property type="entry name" value="aa-tRNA-synth_II"/>
</dbReference>
<dbReference type="InterPro" id="IPR045864">
    <property type="entry name" value="aa-tRNA-synth_II/BPL/LPL"/>
</dbReference>
<dbReference type="InterPro" id="IPR004154">
    <property type="entry name" value="Anticodon-bd"/>
</dbReference>
<dbReference type="InterPro" id="IPR036621">
    <property type="entry name" value="Anticodon-bd_dom_sf"/>
</dbReference>
<dbReference type="InterPro" id="IPR027031">
    <property type="entry name" value="Gly-tRNA_synthase/POLG2"/>
</dbReference>
<dbReference type="InterPro" id="IPR022961">
    <property type="entry name" value="Gly_tRNA_ligase_bac"/>
</dbReference>
<dbReference type="InterPro" id="IPR033731">
    <property type="entry name" value="GlyRS-like_core"/>
</dbReference>
<dbReference type="InterPro" id="IPR002315">
    <property type="entry name" value="tRNA-synt_gly"/>
</dbReference>
<dbReference type="NCBIfam" id="TIGR00389">
    <property type="entry name" value="glyS_dimeric"/>
    <property type="match status" value="1"/>
</dbReference>
<dbReference type="NCBIfam" id="NF003211">
    <property type="entry name" value="PRK04173.1"/>
    <property type="match status" value="1"/>
</dbReference>
<dbReference type="PANTHER" id="PTHR10745:SF8">
    <property type="entry name" value="DNA POLYMERASE SUBUNIT GAMMA-2, MITOCHONDRIAL"/>
    <property type="match status" value="1"/>
</dbReference>
<dbReference type="PANTHER" id="PTHR10745">
    <property type="entry name" value="GLYCYL-TRNA SYNTHETASE/DNA POLYMERASE SUBUNIT GAMMA-2"/>
    <property type="match status" value="1"/>
</dbReference>
<dbReference type="Pfam" id="PF03129">
    <property type="entry name" value="HGTP_anticodon"/>
    <property type="match status" value="1"/>
</dbReference>
<dbReference type="Pfam" id="PF00587">
    <property type="entry name" value="tRNA-synt_2b"/>
    <property type="match status" value="1"/>
</dbReference>
<dbReference type="PRINTS" id="PR01043">
    <property type="entry name" value="TRNASYNTHGLY"/>
</dbReference>
<dbReference type="SUPFAM" id="SSF52954">
    <property type="entry name" value="Class II aaRS ABD-related"/>
    <property type="match status" value="1"/>
</dbReference>
<dbReference type="SUPFAM" id="SSF55681">
    <property type="entry name" value="Class II aaRS and biotin synthetases"/>
    <property type="match status" value="1"/>
</dbReference>
<dbReference type="PROSITE" id="PS50862">
    <property type="entry name" value="AA_TRNA_LIGASE_II"/>
    <property type="match status" value="1"/>
</dbReference>
<organism>
    <name type="scientific">Staphylococcus haemolyticus (strain JCSC1435)</name>
    <dbReference type="NCBI Taxonomy" id="279808"/>
    <lineage>
        <taxon>Bacteria</taxon>
        <taxon>Bacillati</taxon>
        <taxon>Bacillota</taxon>
        <taxon>Bacilli</taxon>
        <taxon>Bacillales</taxon>
        <taxon>Staphylococcaceae</taxon>
        <taxon>Staphylococcus</taxon>
    </lineage>
</organism>
<proteinExistence type="inferred from homology"/>
<feature type="chain" id="PRO_1000047387" description="Glycine--tRNA ligase">
    <location>
        <begin position="1"/>
        <end position="463"/>
    </location>
</feature>
<feature type="binding site" evidence="1">
    <location>
        <position position="98"/>
    </location>
    <ligand>
        <name>substrate</name>
    </ligand>
</feature>
<feature type="binding site" evidence="1">
    <location>
        <position position="174"/>
    </location>
    <ligand>
        <name>substrate</name>
    </ligand>
</feature>
<feature type="binding site" evidence="1">
    <location>
        <begin position="206"/>
        <end position="208"/>
    </location>
    <ligand>
        <name>ATP</name>
        <dbReference type="ChEBI" id="CHEBI:30616"/>
    </ligand>
</feature>
<feature type="binding site" evidence="1">
    <location>
        <begin position="216"/>
        <end position="221"/>
    </location>
    <ligand>
        <name>ATP</name>
        <dbReference type="ChEBI" id="CHEBI:30616"/>
    </ligand>
</feature>
<feature type="binding site" evidence="1">
    <location>
        <begin position="221"/>
        <end position="225"/>
    </location>
    <ligand>
        <name>substrate</name>
    </ligand>
</feature>
<feature type="binding site" evidence="1">
    <location>
        <begin position="290"/>
        <end position="291"/>
    </location>
    <ligand>
        <name>ATP</name>
        <dbReference type="ChEBI" id="CHEBI:30616"/>
    </ligand>
</feature>
<feature type="binding site" evidence="1">
    <location>
        <begin position="330"/>
        <end position="334"/>
    </location>
    <ligand>
        <name>substrate</name>
    </ligand>
</feature>
<feature type="binding site" evidence="1">
    <location>
        <begin position="334"/>
        <end position="337"/>
    </location>
    <ligand>
        <name>ATP</name>
        <dbReference type="ChEBI" id="CHEBI:30616"/>
    </ligand>
</feature>
<name>SYG_STAHJ</name>
<accession>Q4L6R5</accession>
<evidence type="ECO:0000255" key="1">
    <source>
        <dbReference type="HAMAP-Rule" id="MF_00253"/>
    </source>
</evidence>
<reference key="1">
    <citation type="journal article" date="2005" name="J. Bacteriol.">
        <title>Whole-genome sequencing of Staphylococcus haemolyticus uncovers the extreme plasticity of its genome and the evolution of human-colonizing staphylococcal species.</title>
        <authorList>
            <person name="Takeuchi F."/>
            <person name="Watanabe S."/>
            <person name="Baba T."/>
            <person name="Yuzawa H."/>
            <person name="Ito T."/>
            <person name="Morimoto Y."/>
            <person name="Kuroda M."/>
            <person name="Cui L."/>
            <person name="Takahashi M."/>
            <person name="Ankai A."/>
            <person name="Baba S."/>
            <person name="Fukui S."/>
            <person name="Lee J.C."/>
            <person name="Hiramatsu K."/>
        </authorList>
    </citation>
    <scope>NUCLEOTIDE SEQUENCE [LARGE SCALE GENOMIC DNA]</scope>
    <source>
        <strain>JCSC1435</strain>
    </source>
</reference>
<protein>
    <recommendedName>
        <fullName evidence="1">Glycine--tRNA ligase</fullName>
        <ecNumber evidence="1">6.1.1.14</ecNumber>
    </recommendedName>
    <alternativeName>
        <fullName evidence="1">Glycyl-tRNA synthetase</fullName>
        <shortName evidence="1">GlyRS</shortName>
    </alternativeName>
</protein>
<keyword id="KW-0030">Aminoacyl-tRNA synthetase</keyword>
<keyword id="KW-0067">ATP-binding</keyword>
<keyword id="KW-0963">Cytoplasm</keyword>
<keyword id="KW-0436">Ligase</keyword>
<keyword id="KW-0547">Nucleotide-binding</keyword>
<keyword id="KW-0648">Protein biosynthesis</keyword>
<comment type="function">
    <text evidence="1">Catalyzes the attachment of glycine to tRNA(Gly).</text>
</comment>
<comment type="catalytic activity">
    <reaction evidence="1">
        <text>tRNA(Gly) + glycine + ATP = glycyl-tRNA(Gly) + AMP + diphosphate</text>
        <dbReference type="Rhea" id="RHEA:16013"/>
        <dbReference type="Rhea" id="RHEA-COMP:9664"/>
        <dbReference type="Rhea" id="RHEA-COMP:9683"/>
        <dbReference type="ChEBI" id="CHEBI:30616"/>
        <dbReference type="ChEBI" id="CHEBI:33019"/>
        <dbReference type="ChEBI" id="CHEBI:57305"/>
        <dbReference type="ChEBI" id="CHEBI:78442"/>
        <dbReference type="ChEBI" id="CHEBI:78522"/>
        <dbReference type="ChEBI" id="CHEBI:456215"/>
        <dbReference type="EC" id="6.1.1.14"/>
    </reaction>
</comment>
<comment type="subunit">
    <text evidence="1">Homodimer.</text>
</comment>
<comment type="subcellular location">
    <subcellularLocation>
        <location evidence="1">Cytoplasm</location>
    </subcellularLocation>
</comment>
<comment type="similarity">
    <text evidence="1">Belongs to the class-II aminoacyl-tRNA synthetase family.</text>
</comment>
<sequence length="463" mass="53716">MVKDMETIVSLAKHRGFVFPGSDIYGGLSNTWDYGPLGVELKNNVKKAWWQKFITQSPFNVGIDAAILMNPKTWEASGHLGNFNDPMIDNKDSKIRYRADKLIEDYMQKEKGDENFIADGLSFDEMKRIIDDEGIVCPVSGTANWTDIRQFNLMFKTFQGVTEDSTNEIFLRPETAQGIFVNYKNVQRSMRKKLPFGIGQIGKSFRNEITPGNFIFRTREFEQMELEFFCKPGEEIEWQNYWKTFASQWLKDLNINEENMRLRDHDEEELSHYSNATTDIEYRFPFGWGELWGIASRTDFDLKKHSEHSGEDFKYHDPETNEKYVPYCIEPSLGADRVTLAFLCDAYEEEGVEGSKDARTVMHFHPALAPYKAAVLPLSKKLSEEAIKIFEQLSSKFAIDFDESQSIGKRYRRQDEIGTPYCITFDFDSLEDNQVTVRDRDSMEQVRMPISELETFLAEKVAF</sequence>